<sequence length="103" mass="11363">MYAVFQSGGKQHRVAPGHTVRLEKLEVATGSTVEFDQVLLIADGEKVHVGAPLVAGGKVVAEVVSHGRGEKVTIVKFRRRKHHDKKMGHRQWFTEVKITAINA</sequence>
<evidence type="ECO:0000255" key="1">
    <source>
        <dbReference type="HAMAP-Rule" id="MF_01363"/>
    </source>
</evidence>
<evidence type="ECO:0000305" key="2"/>
<proteinExistence type="inferred from homology"/>
<comment type="function">
    <text evidence="1">This protein binds to 23S rRNA in the presence of protein L20.</text>
</comment>
<comment type="subunit">
    <text evidence="1">Part of the 50S ribosomal subunit. Contacts protein L20.</text>
</comment>
<comment type="similarity">
    <text evidence="1">Belongs to the bacterial ribosomal protein bL21 family.</text>
</comment>
<reference key="1">
    <citation type="submission" date="2006-08" db="EMBL/GenBank/DDBJ databases">
        <title>Complete sequence of chromosome 1 of Shewanella sp. MR-7.</title>
        <authorList>
            <person name="Copeland A."/>
            <person name="Lucas S."/>
            <person name="Lapidus A."/>
            <person name="Barry K."/>
            <person name="Detter J.C."/>
            <person name="Glavina del Rio T."/>
            <person name="Hammon N."/>
            <person name="Israni S."/>
            <person name="Dalin E."/>
            <person name="Tice H."/>
            <person name="Pitluck S."/>
            <person name="Kiss H."/>
            <person name="Brettin T."/>
            <person name="Bruce D."/>
            <person name="Han C."/>
            <person name="Tapia R."/>
            <person name="Gilna P."/>
            <person name="Schmutz J."/>
            <person name="Larimer F."/>
            <person name="Land M."/>
            <person name="Hauser L."/>
            <person name="Kyrpides N."/>
            <person name="Mikhailova N."/>
            <person name="Nealson K."/>
            <person name="Konstantinidis K."/>
            <person name="Klappenbach J."/>
            <person name="Tiedje J."/>
            <person name="Richardson P."/>
        </authorList>
    </citation>
    <scope>NUCLEOTIDE SEQUENCE [LARGE SCALE GENOMIC DNA]</scope>
    <source>
        <strain>MR-7</strain>
    </source>
</reference>
<feature type="chain" id="PRO_0000269378" description="Large ribosomal subunit protein bL21">
    <location>
        <begin position="1"/>
        <end position="103"/>
    </location>
</feature>
<protein>
    <recommendedName>
        <fullName evidence="1">Large ribosomal subunit protein bL21</fullName>
    </recommendedName>
    <alternativeName>
        <fullName evidence="2">50S ribosomal protein L21</fullName>
    </alternativeName>
</protein>
<organism>
    <name type="scientific">Shewanella sp. (strain MR-7)</name>
    <dbReference type="NCBI Taxonomy" id="60481"/>
    <lineage>
        <taxon>Bacteria</taxon>
        <taxon>Pseudomonadati</taxon>
        <taxon>Pseudomonadota</taxon>
        <taxon>Gammaproteobacteria</taxon>
        <taxon>Alteromonadales</taxon>
        <taxon>Shewanellaceae</taxon>
        <taxon>Shewanella</taxon>
    </lineage>
</organism>
<keyword id="KW-0687">Ribonucleoprotein</keyword>
<keyword id="KW-0689">Ribosomal protein</keyword>
<keyword id="KW-0694">RNA-binding</keyword>
<keyword id="KW-0699">rRNA-binding</keyword>
<gene>
    <name evidence="1" type="primary">rplU</name>
    <name type="ordered locus">Shewmr7_3125</name>
</gene>
<name>RL21_SHESR</name>
<accession>Q0HRZ6</accession>
<dbReference type="EMBL" id="CP000444">
    <property type="protein sequence ID" value="ABI44109.1"/>
    <property type="molecule type" value="Genomic_DNA"/>
</dbReference>
<dbReference type="SMR" id="Q0HRZ6"/>
<dbReference type="KEGG" id="shm:Shewmr7_3125"/>
<dbReference type="HOGENOM" id="CLU_061463_3_3_6"/>
<dbReference type="GO" id="GO:0005737">
    <property type="term" value="C:cytoplasm"/>
    <property type="evidence" value="ECO:0007669"/>
    <property type="project" value="UniProtKB-ARBA"/>
</dbReference>
<dbReference type="GO" id="GO:1990904">
    <property type="term" value="C:ribonucleoprotein complex"/>
    <property type="evidence" value="ECO:0007669"/>
    <property type="project" value="UniProtKB-KW"/>
</dbReference>
<dbReference type="GO" id="GO:0005840">
    <property type="term" value="C:ribosome"/>
    <property type="evidence" value="ECO:0007669"/>
    <property type="project" value="UniProtKB-KW"/>
</dbReference>
<dbReference type="GO" id="GO:0019843">
    <property type="term" value="F:rRNA binding"/>
    <property type="evidence" value="ECO:0007669"/>
    <property type="project" value="UniProtKB-UniRule"/>
</dbReference>
<dbReference type="GO" id="GO:0003735">
    <property type="term" value="F:structural constituent of ribosome"/>
    <property type="evidence" value="ECO:0007669"/>
    <property type="project" value="InterPro"/>
</dbReference>
<dbReference type="GO" id="GO:0006412">
    <property type="term" value="P:translation"/>
    <property type="evidence" value="ECO:0007669"/>
    <property type="project" value="UniProtKB-UniRule"/>
</dbReference>
<dbReference type="HAMAP" id="MF_01363">
    <property type="entry name" value="Ribosomal_bL21"/>
    <property type="match status" value="1"/>
</dbReference>
<dbReference type="InterPro" id="IPR028909">
    <property type="entry name" value="bL21-like"/>
</dbReference>
<dbReference type="InterPro" id="IPR036164">
    <property type="entry name" value="bL21-like_sf"/>
</dbReference>
<dbReference type="InterPro" id="IPR001787">
    <property type="entry name" value="Ribosomal_bL21"/>
</dbReference>
<dbReference type="InterPro" id="IPR018258">
    <property type="entry name" value="Ribosomal_bL21_CS"/>
</dbReference>
<dbReference type="NCBIfam" id="TIGR00061">
    <property type="entry name" value="L21"/>
    <property type="match status" value="1"/>
</dbReference>
<dbReference type="PANTHER" id="PTHR21349">
    <property type="entry name" value="50S RIBOSOMAL PROTEIN L21"/>
    <property type="match status" value="1"/>
</dbReference>
<dbReference type="PANTHER" id="PTHR21349:SF0">
    <property type="entry name" value="LARGE RIBOSOMAL SUBUNIT PROTEIN BL21M"/>
    <property type="match status" value="1"/>
</dbReference>
<dbReference type="Pfam" id="PF00829">
    <property type="entry name" value="Ribosomal_L21p"/>
    <property type="match status" value="1"/>
</dbReference>
<dbReference type="SUPFAM" id="SSF141091">
    <property type="entry name" value="L21p-like"/>
    <property type="match status" value="1"/>
</dbReference>
<dbReference type="PROSITE" id="PS01169">
    <property type="entry name" value="RIBOSOMAL_L21"/>
    <property type="match status" value="1"/>
</dbReference>